<dbReference type="EMBL" id="CP001349">
    <property type="protein sequence ID" value="ACL59486.1"/>
    <property type="molecule type" value="Genomic_DNA"/>
</dbReference>
<dbReference type="RefSeq" id="WP_015931122.1">
    <property type="nucleotide sequence ID" value="NC_011894.1"/>
</dbReference>
<dbReference type="SMR" id="B8IEB4"/>
<dbReference type="STRING" id="460265.Mnod_4619"/>
<dbReference type="KEGG" id="mno:Mnod_4619"/>
<dbReference type="eggNOG" id="COG0858">
    <property type="taxonomic scope" value="Bacteria"/>
</dbReference>
<dbReference type="HOGENOM" id="CLU_089475_1_0_5"/>
<dbReference type="OrthoDB" id="9805051at2"/>
<dbReference type="Proteomes" id="UP000008207">
    <property type="component" value="Chromosome"/>
</dbReference>
<dbReference type="GO" id="GO:0005829">
    <property type="term" value="C:cytosol"/>
    <property type="evidence" value="ECO:0007669"/>
    <property type="project" value="TreeGrafter"/>
</dbReference>
<dbReference type="GO" id="GO:0043024">
    <property type="term" value="F:ribosomal small subunit binding"/>
    <property type="evidence" value="ECO:0007669"/>
    <property type="project" value="TreeGrafter"/>
</dbReference>
<dbReference type="GO" id="GO:0030490">
    <property type="term" value="P:maturation of SSU-rRNA"/>
    <property type="evidence" value="ECO:0007669"/>
    <property type="project" value="UniProtKB-UniRule"/>
</dbReference>
<dbReference type="Gene3D" id="3.30.300.20">
    <property type="match status" value="1"/>
</dbReference>
<dbReference type="HAMAP" id="MF_00003">
    <property type="entry name" value="RbfA"/>
    <property type="match status" value="1"/>
</dbReference>
<dbReference type="InterPro" id="IPR015946">
    <property type="entry name" value="KH_dom-like_a/b"/>
</dbReference>
<dbReference type="InterPro" id="IPR000238">
    <property type="entry name" value="RbfA"/>
</dbReference>
<dbReference type="InterPro" id="IPR023799">
    <property type="entry name" value="RbfA_dom_sf"/>
</dbReference>
<dbReference type="InterPro" id="IPR020053">
    <property type="entry name" value="Ribosome-bd_factorA_CS"/>
</dbReference>
<dbReference type="NCBIfam" id="NF001802">
    <property type="entry name" value="PRK00521.2-5"/>
    <property type="match status" value="1"/>
</dbReference>
<dbReference type="NCBIfam" id="TIGR00082">
    <property type="entry name" value="rbfA"/>
    <property type="match status" value="1"/>
</dbReference>
<dbReference type="PANTHER" id="PTHR33515">
    <property type="entry name" value="RIBOSOME-BINDING FACTOR A, CHLOROPLASTIC-RELATED"/>
    <property type="match status" value="1"/>
</dbReference>
<dbReference type="PANTHER" id="PTHR33515:SF1">
    <property type="entry name" value="RIBOSOME-BINDING FACTOR A, CHLOROPLASTIC-RELATED"/>
    <property type="match status" value="1"/>
</dbReference>
<dbReference type="Pfam" id="PF02033">
    <property type="entry name" value="RBFA"/>
    <property type="match status" value="1"/>
</dbReference>
<dbReference type="SUPFAM" id="SSF89919">
    <property type="entry name" value="Ribosome-binding factor A, RbfA"/>
    <property type="match status" value="1"/>
</dbReference>
<dbReference type="PROSITE" id="PS01319">
    <property type="entry name" value="RBFA"/>
    <property type="match status" value="1"/>
</dbReference>
<organism>
    <name type="scientific">Methylobacterium nodulans (strain LMG 21967 / CNCM I-2342 / ORS 2060)</name>
    <dbReference type="NCBI Taxonomy" id="460265"/>
    <lineage>
        <taxon>Bacteria</taxon>
        <taxon>Pseudomonadati</taxon>
        <taxon>Pseudomonadota</taxon>
        <taxon>Alphaproteobacteria</taxon>
        <taxon>Hyphomicrobiales</taxon>
        <taxon>Methylobacteriaceae</taxon>
        <taxon>Methylobacterium</taxon>
    </lineage>
</organism>
<gene>
    <name evidence="1" type="primary">rbfA</name>
    <name type="ordered locus">Mnod_4619</name>
</gene>
<evidence type="ECO:0000255" key="1">
    <source>
        <dbReference type="HAMAP-Rule" id="MF_00003"/>
    </source>
</evidence>
<comment type="function">
    <text evidence="1">One of several proteins that assist in the late maturation steps of the functional core of the 30S ribosomal subunit. Associates with free 30S ribosomal subunits (but not with 30S subunits that are part of 70S ribosomes or polysomes). Required for efficient processing of 16S rRNA. May interact with the 5'-terminal helix region of 16S rRNA.</text>
</comment>
<comment type="subunit">
    <text evidence="1">Monomer. Binds 30S ribosomal subunits, but not 50S ribosomal subunits or 70S ribosomes.</text>
</comment>
<comment type="subcellular location">
    <subcellularLocation>
        <location evidence="1">Cytoplasm</location>
    </subcellularLocation>
</comment>
<comment type="similarity">
    <text evidence="1">Belongs to the RbfA family.</text>
</comment>
<protein>
    <recommendedName>
        <fullName evidence="1">Ribosome-binding factor A</fullName>
    </recommendedName>
</protein>
<name>RBFA_METNO</name>
<reference key="1">
    <citation type="submission" date="2009-01" db="EMBL/GenBank/DDBJ databases">
        <title>Complete sequence of chromosome of Methylobacterium nodulans ORS 2060.</title>
        <authorList>
            <consortium name="US DOE Joint Genome Institute"/>
            <person name="Lucas S."/>
            <person name="Copeland A."/>
            <person name="Lapidus A."/>
            <person name="Glavina del Rio T."/>
            <person name="Dalin E."/>
            <person name="Tice H."/>
            <person name="Bruce D."/>
            <person name="Goodwin L."/>
            <person name="Pitluck S."/>
            <person name="Sims D."/>
            <person name="Brettin T."/>
            <person name="Detter J.C."/>
            <person name="Han C."/>
            <person name="Larimer F."/>
            <person name="Land M."/>
            <person name="Hauser L."/>
            <person name="Kyrpides N."/>
            <person name="Ivanova N."/>
            <person name="Marx C.J."/>
            <person name="Richardson P."/>
        </authorList>
    </citation>
    <scope>NUCLEOTIDE SEQUENCE [LARGE SCALE GENOMIC DNA]</scope>
    <source>
        <strain>LMG 21967 / CNCM I-2342 / ORS 2060</strain>
    </source>
</reference>
<accession>B8IEB4</accession>
<sequence length="135" mass="15463">MRKPTESAGPTQRQQRVAELVRHAIAEVLSRGDLQDPVLSRHVITVPEVRMSPDLKLATAYVMPLGGEDEQPVIEALERNRKVLRQEVARRVNLKFAPDLRFRRDETFDEAARIDRLLRSDKVQRDLGPDRDSGE</sequence>
<keyword id="KW-0963">Cytoplasm</keyword>
<keyword id="KW-1185">Reference proteome</keyword>
<keyword id="KW-0690">Ribosome biogenesis</keyword>
<feature type="chain" id="PRO_1000201641" description="Ribosome-binding factor A">
    <location>
        <begin position="1"/>
        <end position="135"/>
    </location>
</feature>
<proteinExistence type="inferred from homology"/>